<name>CHMO_ARATH</name>
<feature type="transit peptide" description="Chloroplast" evidence="2">
    <location>
        <begin position="1"/>
        <end position="47"/>
    </location>
</feature>
<feature type="chain" id="PRO_0000020925" description="Choline monooxygenase, chloroplastic">
    <location>
        <begin position="48"/>
        <end position="422"/>
    </location>
</feature>
<feature type="domain" description="Rieske" evidence="3">
    <location>
        <begin position="96"/>
        <end position="203"/>
    </location>
</feature>
<feature type="binding site" evidence="3">
    <location>
        <position position="138"/>
    </location>
    <ligand>
        <name>[2Fe-2S] cluster</name>
        <dbReference type="ChEBI" id="CHEBI:190135"/>
    </ligand>
</feature>
<feature type="binding site" evidence="3">
    <location>
        <position position="140"/>
    </location>
    <ligand>
        <name>[2Fe-2S] cluster</name>
        <dbReference type="ChEBI" id="CHEBI:190135"/>
    </ligand>
</feature>
<feature type="binding site" evidence="3">
    <location>
        <position position="157"/>
    </location>
    <ligand>
        <name>[2Fe-2S] cluster</name>
        <dbReference type="ChEBI" id="CHEBI:190135"/>
    </ligand>
</feature>
<feature type="binding site" evidence="3">
    <location>
        <position position="160"/>
    </location>
    <ligand>
        <name>[2Fe-2S] cluster</name>
        <dbReference type="ChEBI" id="CHEBI:190135"/>
    </ligand>
</feature>
<feature type="binding site" evidence="2">
    <location>
        <position position="269"/>
    </location>
    <ligand>
        <name>Fe cation</name>
        <dbReference type="ChEBI" id="CHEBI:24875"/>
    </ligand>
</feature>
<feature type="binding site" evidence="2">
    <location>
        <position position="274"/>
    </location>
    <ligand>
        <name>Fe cation</name>
        <dbReference type="ChEBI" id="CHEBI:24875"/>
    </ligand>
</feature>
<organism>
    <name type="scientific">Arabidopsis thaliana</name>
    <name type="common">Mouse-ear cress</name>
    <dbReference type="NCBI Taxonomy" id="3702"/>
    <lineage>
        <taxon>Eukaryota</taxon>
        <taxon>Viridiplantae</taxon>
        <taxon>Streptophyta</taxon>
        <taxon>Embryophyta</taxon>
        <taxon>Tracheophyta</taxon>
        <taxon>Spermatophyta</taxon>
        <taxon>Magnoliopsida</taxon>
        <taxon>eudicotyledons</taxon>
        <taxon>Gunneridae</taxon>
        <taxon>Pentapetalae</taxon>
        <taxon>rosids</taxon>
        <taxon>malvids</taxon>
        <taxon>Brassicales</taxon>
        <taxon>Brassicaceae</taxon>
        <taxon>Camelineae</taxon>
        <taxon>Arabidopsis</taxon>
    </lineage>
</organism>
<comment type="function">
    <text evidence="1">Catalyzes the first step of the osmoprotectant glycine betaine synthesis.</text>
</comment>
<comment type="catalytic activity">
    <reaction>
        <text>choline + 2 reduced [2Fe-2S]-[ferredoxin] + O2 + 2 H(+) = betaine aldehyde hydrate + 2 oxidized [2Fe-2S]-[ferredoxin] + H2O</text>
        <dbReference type="Rhea" id="RHEA:17769"/>
        <dbReference type="Rhea" id="RHEA-COMP:10000"/>
        <dbReference type="Rhea" id="RHEA-COMP:10001"/>
        <dbReference type="ChEBI" id="CHEBI:15354"/>
        <dbReference type="ChEBI" id="CHEBI:15377"/>
        <dbReference type="ChEBI" id="CHEBI:15378"/>
        <dbReference type="ChEBI" id="CHEBI:15379"/>
        <dbReference type="ChEBI" id="CHEBI:15870"/>
        <dbReference type="ChEBI" id="CHEBI:33737"/>
        <dbReference type="ChEBI" id="CHEBI:33738"/>
        <dbReference type="EC" id="1.14.15.7"/>
    </reaction>
</comment>
<comment type="cofactor">
    <cofactor>
        <name>[2Fe-2S] cluster</name>
        <dbReference type="ChEBI" id="CHEBI:190135"/>
    </cofactor>
    <text>Binds 1 [2Fe-2S] cluster.</text>
</comment>
<comment type="cofactor">
    <cofactor evidence="4">
        <name>Fe cation</name>
        <dbReference type="ChEBI" id="CHEBI:24875"/>
    </cofactor>
    <text evidence="4">Binds 1 Fe cation.</text>
</comment>
<comment type="cofactor">
    <cofactor evidence="1">
        <name>Mg(2+)</name>
        <dbReference type="ChEBI" id="CHEBI:18420"/>
    </cofactor>
</comment>
<comment type="pathway">
    <text>Amine and polyamine biosynthesis; betaine biosynthesis via choline pathway; betaine aldehyde from choline (monooxygenase route): step 1/1.</text>
</comment>
<comment type="subcellular location">
    <subcellularLocation>
        <location evidence="1">Plastid</location>
        <location evidence="1">Chloroplast stroma</location>
    </subcellularLocation>
</comment>
<comment type="similarity">
    <text evidence="4">Belongs to the choline monooxygenase family.</text>
</comment>
<comment type="sequence caution" evidence="4">
    <conflict type="erroneous gene model prediction">
        <sequence resource="EMBL-CDS" id="CAB43664"/>
    </conflict>
</comment>
<comment type="sequence caution" evidence="4">
    <conflict type="erroneous gene model prediction">
        <sequence resource="EMBL-CDS" id="CAB79747"/>
    </conflict>
</comment>
<proteinExistence type="evidence at transcript level"/>
<keyword id="KW-0001">2Fe-2S</keyword>
<keyword id="KW-0150">Chloroplast</keyword>
<keyword id="KW-0408">Iron</keyword>
<keyword id="KW-0411">Iron-sulfur</keyword>
<keyword id="KW-0460">Magnesium</keyword>
<keyword id="KW-0479">Metal-binding</keyword>
<keyword id="KW-0503">Monooxygenase</keyword>
<keyword id="KW-0560">Oxidoreductase</keyword>
<keyword id="KW-0934">Plastid</keyword>
<keyword id="KW-1185">Reference proteome</keyword>
<keyword id="KW-0809">Transit peptide</keyword>
<evidence type="ECO:0000250" key="1"/>
<evidence type="ECO:0000255" key="2"/>
<evidence type="ECO:0000255" key="3">
    <source>
        <dbReference type="PROSITE-ProRule" id="PRU00628"/>
    </source>
</evidence>
<evidence type="ECO:0000305" key="4"/>
<gene>
    <name type="ordered locus">At4g29890</name>
    <name type="ORF">F27B13.130</name>
</gene>
<sequence length="422" mass="47724">MMTTLTATVPEFLPPSLKSTRGYFNSHSEFGVSISKFSRRRFHNPTRVFAVSDISKLVTEFDPKIPLERASTPPSSWYTDPQFYSFELDRVFYGGWQAVGYSDQIKESRDFFTGRLGDVDFVVCRDENGKIHAFHNVCSHHASILASGNGRKSCFVCLYHGWTYSLSGSLVKATRMSGIQNFSLSEMGLKPLRVAVWGPFVLLKVTAATSRKGEVETDELVASEWLGTSVGRLSQGGVDSPLSYICRREYTIDCNWKVFCDNYLDGGYHVPYAHKGLMSGLDLETYSTTIFEKVSIQECGGGSKVGEDGFDRLGSEALYAFVYPNFMINRYGPWMDTNLVLPLGPRKCKVVFDYFLDPSLKDDEAFIKRSLEESDRVQMEDVMLCESVQRGLESQAYDKGRYALVEKPMHHFHCLLHHNLKL</sequence>
<reference key="1">
    <citation type="journal article" date="1999" name="Nature">
        <title>Sequence and analysis of chromosome 4 of the plant Arabidopsis thaliana.</title>
        <authorList>
            <person name="Mayer K.F.X."/>
            <person name="Schueller C."/>
            <person name="Wambutt R."/>
            <person name="Murphy G."/>
            <person name="Volckaert G."/>
            <person name="Pohl T."/>
            <person name="Duesterhoeft A."/>
            <person name="Stiekema W."/>
            <person name="Entian K.-D."/>
            <person name="Terryn N."/>
            <person name="Harris B."/>
            <person name="Ansorge W."/>
            <person name="Brandt P."/>
            <person name="Grivell L.A."/>
            <person name="Rieger M."/>
            <person name="Weichselgartner M."/>
            <person name="de Simone V."/>
            <person name="Obermaier B."/>
            <person name="Mache R."/>
            <person name="Mueller M."/>
            <person name="Kreis M."/>
            <person name="Delseny M."/>
            <person name="Puigdomenech P."/>
            <person name="Watson M."/>
            <person name="Schmidtheini T."/>
            <person name="Reichert B."/>
            <person name="Portetelle D."/>
            <person name="Perez-Alonso M."/>
            <person name="Boutry M."/>
            <person name="Bancroft I."/>
            <person name="Vos P."/>
            <person name="Hoheisel J."/>
            <person name="Zimmermann W."/>
            <person name="Wedler H."/>
            <person name="Ridley P."/>
            <person name="Langham S.-A."/>
            <person name="McCullagh B."/>
            <person name="Bilham L."/>
            <person name="Robben J."/>
            <person name="van der Schueren J."/>
            <person name="Grymonprez B."/>
            <person name="Chuang Y.-J."/>
            <person name="Vandenbussche F."/>
            <person name="Braeken M."/>
            <person name="Weltjens I."/>
            <person name="Voet M."/>
            <person name="Bastiaens I."/>
            <person name="Aert R."/>
            <person name="Defoor E."/>
            <person name="Weitzenegger T."/>
            <person name="Bothe G."/>
            <person name="Ramsperger U."/>
            <person name="Hilbert H."/>
            <person name="Braun M."/>
            <person name="Holzer E."/>
            <person name="Brandt A."/>
            <person name="Peters S."/>
            <person name="van Staveren M."/>
            <person name="Dirkse W."/>
            <person name="Mooijman P."/>
            <person name="Klein Lankhorst R."/>
            <person name="Rose M."/>
            <person name="Hauf J."/>
            <person name="Koetter P."/>
            <person name="Berneiser S."/>
            <person name="Hempel S."/>
            <person name="Feldpausch M."/>
            <person name="Lamberth S."/>
            <person name="Van den Daele H."/>
            <person name="De Keyser A."/>
            <person name="Buysshaert C."/>
            <person name="Gielen J."/>
            <person name="Villarroel R."/>
            <person name="De Clercq R."/>
            <person name="van Montagu M."/>
            <person name="Rogers J."/>
            <person name="Cronin A."/>
            <person name="Quail M.A."/>
            <person name="Bray-Allen S."/>
            <person name="Clark L."/>
            <person name="Doggett J."/>
            <person name="Hall S."/>
            <person name="Kay M."/>
            <person name="Lennard N."/>
            <person name="McLay K."/>
            <person name="Mayes R."/>
            <person name="Pettett A."/>
            <person name="Rajandream M.A."/>
            <person name="Lyne M."/>
            <person name="Benes V."/>
            <person name="Rechmann S."/>
            <person name="Borkova D."/>
            <person name="Bloecker H."/>
            <person name="Scharfe M."/>
            <person name="Grimm M."/>
            <person name="Loehnert T.-H."/>
            <person name="Dose S."/>
            <person name="de Haan M."/>
            <person name="Maarse A.C."/>
            <person name="Schaefer M."/>
            <person name="Mueller-Auer S."/>
            <person name="Gabel C."/>
            <person name="Fuchs M."/>
            <person name="Fartmann B."/>
            <person name="Granderath K."/>
            <person name="Dauner D."/>
            <person name="Herzl A."/>
            <person name="Neumann S."/>
            <person name="Argiriou A."/>
            <person name="Vitale D."/>
            <person name="Liguori R."/>
            <person name="Piravandi E."/>
            <person name="Massenet O."/>
            <person name="Quigley F."/>
            <person name="Clabauld G."/>
            <person name="Muendlein A."/>
            <person name="Felber R."/>
            <person name="Schnabl S."/>
            <person name="Hiller R."/>
            <person name="Schmidt W."/>
            <person name="Lecharny A."/>
            <person name="Aubourg S."/>
            <person name="Chefdor F."/>
            <person name="Cooke R."/>
            <person name="Berger C."/>
            <person name="Monfort A."/>
            <person name="Casacuberta E."/>
            <person name="Gibbons T."/>
            <person name="Weber N."/>
            <person name="Vandenbol M."/>
            <person name="Bargues M."/>
            <person name="Terol J."/>
            <person name="Torres A."/>
            <person name="Perez-Perez A."/>
            <person name="Purnelle B."/>
            <person name="Bent E."/>
            <person name="Johnson S."/>
            <person name="Tacon D."/>
            <person name="Jesse T."/>
            <person name="Heijnen L."/>
            <person name="Schwarz S."/>
            <person name="Scholler P."/>
            <person name="Heber S."/>
            <person name="Francs P."/>
            <person name="Bielke C."/>
            <person name="Frishman D."/>
            <person name="Haase D."/>
            <person name="Lemcke K."/>
            <person name="Mewes H.-W."/>
            <person name="Stocker S."/>
            <person name="Zaccaria P."/>
            <person name="Bevan M."/>
            <person name="Wilson R.K."/>
            <person name="de la Bastide M."/>
            <person name="Habermann K."/>
            <person name="Parnell L."/>
            <person name="Dedhia N."/>
            <person name="Gnoj L."/>
            <person name="Schutz K."/>
            <person name="Huang E."/>
            <person name="Spiegel L."/>
            <person name="Sekhon M."/>
            <person name="Murray J."/>
            <person name="Sheet P."/>
            <person name="Cordes M."/>
            <person name="Abu-Threideh J."/>
            <person name="Stoneking T."/>
            <person name="Kalicki J."/>
            <person name="Graves T."/>
            <person name="Harmon G."/>
            <person name="Edwards J."/>
            <person name="Latreille P."/>
            <person name="Courtney L."/>
            <person name="Cloud J."/>
            <person name="Abbott A."/>
            <person name="Scott K."/>
            <person name="Johnson D."/>
            <person name="Minx P."/>
            <person name="Bentley D."/>
            <person name="Fulton B."/>
            <person name="Miller N."/>
            <person name="Greco T."/>
            <person name="Kemp K."/>
            <person name="Kramer J."/>
            <person name="Fulton L."/>
            <person name="Mardis E."/>
            <person name="Dante M."/>
            <person name="Pepin K."/>
            <person name="Hillier L.W."/>
            <person name="Nelson J."/>
            <person name="Spieth J."/>
            <person name="Ryan E."/>
            <person name="Andrews S."/>
            <person name="Geisel C."/>
            <person name="Layman D."/>
            <person name="Du H."/>
            <person name="Ali J."/>
            <person name="Berghoff A."/>
            <person name="Jones K."/>
            <person name="Drone K."/>
            <person name="Cotton M."/>
            <person name="Joshu C."/>
            <person name="Antonoiu B."/>
            <person name="Zidanic M."/>
            <person name="Strong C."/>
            <person name="Sun H."/>
            <person name="Lamar B."/>
            <person name="Yordan C."/>
            <person name="Ma P."/>
            <person name="Zhong J."/>
            <person name="Preston R."/>
            <person name="Vil D."/>
            <person name="Shekher M."/>
            <person name="Matero A."/>
            <person name="Shah R."/>
            <person name="Swaby I.K."/>
            <person name="O'Shaughnessy A."/>
            <person name="Rodriguez M."/>
            <person name="Hoffman J."/>
            <person name="Till S."/>
            <person name="Granat S."/>
            <person name="Shohdy N."/>
            <person name="Hasegawa A."/>
            <person name="Hameed A."/>
            <person name="Lodhi M."/>
            <person name="Johnson A."/>
            <person name="Chen E."/>
            <person name="Marra M.A."/>
            <person name="Martienssen R."/>
            <person name="McCombie W.R."/>
        </authorList>
    </citation>
    <scope>NUCLEOTIDE SEQUENCE [LARGE SCALE GENOMIC DNA]</scope>
    <source>
        <strain>cv. Columbia</strain>
    </source>
</reference>
<reference key="2">
    <citation type="journal article" date="2017" name="Plant J.">
        <title>Araport11: a complete reannotation of the Arabidopsis thaliana reference genome.</title>
        <authorList>
            <person name="Cheng C.Y."/>
            <person name="Krishnakumar V."/>
            <person name="Chan A.P."/>
            <person name="Thibaud-Nissen F."/>
            <person name="Schobel S."/>
            <person name="Town C.D."/>
        </authorList>
    </citation>
    <scope>GENOME REANNOTATION</scope>
    <source>
        <strain>cv. Columbia</strain>
    </source>
</reference>
<reference key="3">
    <citation type="submission" date="2006-09" db="EMBL/GenBank/DDBJ databases">
        <title>Arabidopsis ORF clones.</title>
        <authorList>
            <person name="Bautista V.R."/>
            <person name="Kim C.J."/>
            <person name="Chen H."/>
            <person name="Quinitio C."/>
            <person name="Ecker J.R."/>
        </authorList>
    </citation>
    <scope>NUCLEOTIDE SEQUENCE [LARGE SCALE MRNA]</scope>
    <source>
        <strain>cv. Columbia</strain>
    </source>
</reference>
<protein>
    <recommendedName>
        <fullName>Choline monooxygenase, chloroplastic</fullName>
        <ecNumber>1.14.15.7</ecNumber>
    </recommendedName>
</protein>
<dbReference type="EC" id="1.14.15.7"/>
<dbReference type="EMBL" id="AL050352">
    <property type="protein sequence ID" value="CAB43664.1"/>
    <property type="status" value="ALT_SEQ"/>
    <property type="molecule type" value="Genomic_DNA"/>
</dbReference>
<dbReference type="EMBL" id="AL161575">
    <property type="protein sequence ID" value="CAB79747.1"/>
    <property type="status" value="ALT_SEQ"/>
    <property type="molecule type" value="Genomic_DNA"/>
</dbReference>
<dbReference type="EMBL" id="CP002687">
    <property type="protein sequence ID" value="AEE85689.1"/>
    <property type="molecule type" value="Genomic_DNA"/>
</dbReference>
<dbReference type="EMBL" id="BT028917">
    <property type="protein sequence ID" value="ABI49464.1"/>
    <property type="molecule type" value="mRNA"/>
</dbReference>
<dbReference type="RefSeq" id="NP_194718.2">
    <property type="nucleotide sequence ID" value="NM_119135.4"/>
</dbReference>
<dbReference type="SMR" id="Q9SZR0"/>
<dbReference type="FunCoup" id="Q9SZR0">
    <property type="interactions" value="81"/>
</dbReference>
<dbReference type="STRING" id="3702.Q9SZR0"/>
<dbReference type="PaxDb" id="3702-AT4G29890.1"/>
<dbReference type="ProteomicsDB" id="246998"/>
<dbReference type="EnsemblPlants" id="AT4G29890.1">
    <property type="protein sequence ID" value="AT4G29890.1"/>
    <property type="gene ID" value="AT4G29890"/>
</dbReference>
<dbReference type="GeneID" id="829111"/>
<dbReference type="Gramene" id="AT4G29890.1">
    <property type="protein sequence ID" value="AT4G29890.1"/>
    <property type="gene ID" value="AT4G29890"/>
</dbReference>
<dbReference type="KEGG" id="ath:AT4G29890"/>
<dbReference type="Araport" id="AT4G29890"/>
<dbReference type="TAIR" id="AT4G29890"/>
<dbReference type="eggNOG" id="ENOG502QQJW">
    <property type="taxonomic scope" value="Eukaryota"/>
</dbReference>
<dbReference type="HOGENOM" id="CLU_026244_2_1_1"/>
<dbReference type="InParanoid" id="Q9SZR0"/>
<dbReference type="OMA" id="NIMVEWY"/>
<dbReference type="PhylomeDB" id="Q9SZR0"/>
<dbReference type="BioCyc" id="ARA:AT4G29890-MONOMER"/>
<dbReference type="UniPathway" id="UPA00529">
    <property type="reaction ID" value="UER00430"/>
</dbReference>
<dbReference type="PRO" id="PR:Q9SZR0"/>
<dbReference type="Proteomes" id="UP000006548">
    <property type="component" value="Chromosome 4"/>
</dbReference>
<dbReference type="ExpressionAtlas" id="Q9SZR0">
    <property type="expression patterns" value="baseline and differential"/>
</dbReference>
<dbReference type="GO" id="GO:0009570">
    <property type="term" value="C:chloroplast stroma"/>
    <property type="evidence" value="ECO:0007669"/>
    <property type="project" value="UniProtKB-SubCell"/>
</dbReference>
<dbReference type="GO" id="GO:0051537">
    <property type="term" value="F:2 iron, 2 sulfur cluster binding"/>
    <property type="evidence" value="ECO:0007669"/>
    <property type="project" value="UniProtKB-KW"/>
</dbReference>
<dbReference type="GO" id="GO:0019133">
    <property type="term" value="F:choline monooxygenase activity"/>
    <property type="evidence" value="ECO:0007669"/>
    <property type="project" value="UniProtKB-EC"/>
</dbReference>
<dbReference type="GO" id="GO:0005506">
    <property type="term" value="F:iron ion binding"/>
    <property type="evidence" value="ECO:0007669"/>
    <property type="project" value="InterPro"/>
</dbReference>
<dbReference type="GO" id="GO:0019285">
    <property type="term" value="P:glycine betaine biosynthetic process from choline"/>
    <property type="evidence" value="ECO:0007669"/>
    <property type="project" value="UniProtKB-UniPathway"/>
</dbReference>
<dbReference type="CDD" id="cd08883">
    <property type="entry name" value="RHO_alpha_C_CMO-like"/>
    <property type="match status" value="1"/>
</dbReference>
<dbReference type="CDD" id="cd03541">
    <property type="entry name" value="Rieske_RO_Alpha_CMO"/>
    <property type="match status" value="1"/>
</dbReference>
<dbReference type="Gene3D" id="3.90.380.10">
    <property type="entry name" value="Naphthalene 1,2-dioxygenase Alpha Subunit, Chain A, domain 1"/>
    <property type="match status" value="2"/>
</dbReference>
<dbReference type="Gene3D" id="2.102.10.10">
    <property type="entry name" value="Rieske [2Fe-2S] iron-sulphur domain"/>
    <property type="match status" value="1"/>
</dbReference>
<dbReference type="InterPro" id="IPR017941">
    <property type="entry name" value="Rieske_2Fe-2S"/>
</dbReference>
<dbReference type="InterPro" id="IPR036922">
    <property type="entry name" value="Rieske_2Fe-2S_sf"/>
</dbReference>
<dbReference type="InterPro" id="IPR015879">
    <property type="entry name" value="Ring_hydroxy_dOase_asu_C_dom"/>
</dbReference>
<dbReference type="InterPro" id="IPR001663">
    <property type="entry name" value="Rng_hydr_dOase-A"/>
</dbReference>
<dbReference type="PANTHER" id="PTHR43756">
    <property type="entry name" value="CHOLINE MONOOXYGENASE, CHLOROPLASTIC"/>
    <property type="match status" value="1"/>
</dbReference>
<dbReference type="PANTHER" id="PTHR43756:SF5">
    <property type="entry name" value="CHOLINE MONOOXYGENASE, CHLOROPLASTIC"/>
    <property type="match status" value="1"/>
</dbReference>
<dbReference type="Pfam" id="PF00355">
    <property type="entry name" value="Rieske"/>
    <property type="match status" value="1"/>
</dbReference>
<dbReference type="Pfam" id="PF00848">
    <property type="entry name" value="Ring_hydroxyl_A"/>
    <property type="match status" value="1"/>
</dbReference>
<dbReference type="PRINTS" id="PR00090">
    <property type="entry name" value="RNGDIOXGNASE"/>
</dbReference>
<dbReference type="SUPFAM" id="SSF55961">
    <property type="entry name" value="Bet v1-like"/>
    <property type="match status" value="1"/>
</dbReference>
<dbReference type="SUPFAM" id="SSF50022">
    <property type="entry name" value="ISP domain"/>
    <property type="match status" value="1"/>
</dbReference>
<dbReference type="PROSITE" id="PS51296">
    <property type="entry name" value="RIESKE"/>
    <property type="match status" value="1"/>
</dbReference>
<accession>Q9SZR0</accession>
<accession>Q0IGK3</accession>